<comment type="catalytic activity">
    <reaction evidence="1">
        <text>L-citrulline + L-aspartate + ATP = 2-(N(omega)-L-arginino)succinate + AMP + diphosphate + H(+)</text>
        <dbReference type="Rhea" id="RHEA:10932"/>
        <dbReference type="ChEBI" id="CHEBI:15378"/>
        <dbReference type="ChEBI" id="CHEBI:29991"/>
        <dbReference type="ChEBI" id="CHEBI:30616"/>
        <dbReference type="ChEBI" id="CHEBI:33019"/>
        <dbReference type="ChEBI" id="CHEBI:57472"/>
        <dbReference type="ChEBI" id="CHEBI:57743"/>
        <dbReference type="ChEBI" id="CHEBI:456215"/>
        <dbReference type="EC" id="6.3.4.5"/>
    </reaction>
</comment>
<comment type="pathway">
    <text evidence="1">Amino-acid biosynthesis; L-arginine biosynthesis; L-arginine from L-ornithine and carbamoyl phosphate: step 2/3.</text>
</comment>
<comment type="subunit">
    <text evidence="1">Homotetramer.</text>
</comment>
<comment type="subcellular location">
    <subcellularLocation>
        <location evidence="1">Cytoplasm</location>
    </subcellularLocation>
</comment>
<comment type="similarity">
    <text evidence="1">Belongs to the argininosuccinate synthase family. Type 2 subfamily.</text>
</comment>
<sequence length="445" mass="49005">MSTILKSLPKGENVGIAFSGGLDTSAALLWMKQKGARVFAYTANLGQPDEADYDEIPRKAMEFGAEKARLVDCRSQLVHEGIAAIQSGAFHVSTGGVAYFNTTPLGRAVTGTMLVSAMKEDGVNIWGDGSTYKGNDIERFYRYGLLTNPDLRIYKPWLDQQFIDELGGRAEMSAFMTAHGFAYKMSSEKAYSTDSNLLGATHEAKDLEHLDSGIRIVNPIMGVPFWRDDCAVAAETVSVRFAEGQPVALNGKTFTDPVALFLEANAIGGRHGLGMSDQIENRIIEAKSRGIYEAPAMALLHIAYERLVTGIHNEDTIEQYRISGMRLGRLLYQGRWFDSQALMLRETAQRWVARAITGEVTLELRRGNDYSILNTQSPNLTYAPERLSMEKVEDAPFTPGDRIGQLTMRNLDITDTRAKLDLYAKSGLLSAGEGSHIPKLESDKG</sequence>
<dbReference type="EC" id="6.3.4.5" evidence="1"/>
<dbReference type="EMBL" id="CP000301">
    <property type="protein sequence ID" value="ABD85610.1"/>
    <property type="molecule type" value="Genomic_DNA"/>
</dbReference>
<dbReference type="SMR" id="Q21DC6"/>
<dbReference type="STRING" id="316056.RPC_0031"/>
<dbReference type="KEGG" id="rpc:RPC_0031"/>
<dbReference type="eggNOG" id="COG0137">
    <property type="taxonomic scope" value="Bacteria"/>
</dbReference>
<dbReference type="HOGENOM" id="CLU_032784_4_1_5"/>
<dbReference type="OrthoDB" id="9801641at2"/>
<dbReference type="UniPathway" id="UPA00068">
    <property type="reaction ID" value="UER00113"/>
</dbReference>
<dbReference type="GO" id="GO:0005737">
    <property type="term" value="C:cytoplasm"/>
    <property type="evidence" value="ECO:0007669"/>
    <property type="project" value="UniProtKB-SubCell"/>
</dbReference>
<dbReference type="GO" id="GO:0004055">
    <property type="term" value="F:argininosuccinate synthase activity"/>
    <property type="evidence" value="ECO:0007669"/>
    <property type="project" value="UniProtKB-UniRule"/>
</dbReference>
<dbReference type="GO" id="GO:0005524">
    <property type="term" value="F:ATP binding"/>
    <property type="evidence" value="ECO:0007669"/>
    <property type="project" value="UniProtKB-UniRule"/>
</dbReference>
<dbReference type="GO" id="GO:0042803">
    <property type="term" value="F:protein homodimerization activity"/>
    <property type="evidence" value="ECO:0007669"/>
    <property type="project" value="InterPro"/>
</dbReference>
<dbReference type="GO" id="GO:0000053">
    <property type="term" value="P:argininosuccinate metabolic process"/>
    <property type="evidence" value="ECO:0007669"/>
    <property type="project" value="TreeGrafter"/>
</dbReference>
<dbReference type="GO" id="GO:0006526">
    <property type="term" value="P:L-arginine biosynthetic process"/>
    <property type="evidence" value="ECO:0007669"/>
    <property type="project" value="UniProtKB-UniRule"/>
</dbReference>
<dbReference type="GO" id="GO:0000050">
    <property type="term" value="P:urea cycle"/>
    <property type="evidence" value="ECO:0007669"/>
    <property type="project" value="TreeGrafter"/>
</dbReference>
<dbReference type="CDD" id="cd01999">
    <property type="entry name" value="ASS"/>
    <property type="match status" value="1"/>
</dbReference>
<dbReference type="FunFam" id="1.10.287.400:FF:000001">
    <property type="entry name" value="Argininosuccinate synthase"/>
    <property type="match status" value="1"/>
</dbReference>
<dbReference type="Gene3D" id="1.10.287.400">
    <property type="match status" value="1"/>
</dbReference>
<dbReference type="Gene3D" id="3.90.1260.10">
    <property type="entry name" value="Argininosuccinate synthetase, chain A, domain 2"/>
    <property type="match status" value="1"/>
</dbReference>
<dbReference type="Gene3D" id="3.40.50.620">
    <property type="entry name" value="HUPs"/>
    <property type="match status" value="1"/>
</dbReference>
<dbReference type="HAMAP" id="MF_00581">
    <property type="entry name" value="Arg_succ_synth_type2"/>
    <property type="match status" value="1"/>
</dbReference>
<dbReference type="InterPro" id="IPR023437">
    <property type="entry name" value="Arg_succ_synth_type2_subfam"/>
</dbReference>
<dbReference type="InterPro" id="IPR048268">
    <property type="entry name" value="Arginosuc_syn_C"/>
</dbReference>
<dbReference type="InterPro" id="IPR048267">
    <property type="entry name" value="Arginosuc_syn_N"/>
</dbReference>
<dbReference type="InterPro" id="IPR001518">
    <property type="entry name" value="Arginosuc_synth"/>
</dbReference>
<dbReference type="InterPro" id="IPR018223">
    <property type="entry name" value="Arginosuc_synth_CS"/>
</dbReference>
<dbReference type="InterPro" id="IPR023434">
    <property type="entry name" value="Arginosuc_synth_type_1_subfam"/>
</dbReference>
<dbReference type="InterPro" id="IPR024074">
    <property type="entry name" value="AS_cat/multimer_dom_body"/>
</dbReference>
<dbReference type="InterPro" id="IPR024073">
    <property type="entry name" value="AS_multimer_C_tail"/>
</dbReference>
<dbReference type="InterPro" id="IPR014729">
    <property type="entry name" value="Rossmann-like_a/b/a_fold"/>
</dbReference>
<dbReference type="NCBIfam" id="TIGR00032">
    <property type="entry name" value="argG"/>
    <property type="match status" value="1"/>
</dbReference>
<dbReference type="NCBIfam" id="NF003779">
    <property type="entry name" value="PRK05370.1"/>
    <property type="match status" value="1"/>
</dbReference>
<dbReference type="PANTHER" id="PTHR11587">
    <property type="entry name" value="ARGININOSUCCINATE SYNTHASE"/>
    <property type="match status" value="1"/>
</dbReference>
<dbReference type="PANTHER" id="PTHR11587:SF2">
    <property type="entry name" value="ARGININOSUCCINATE SYNTHASE"/>
    <property type="match status" value="1"/>
</dbReference>
<dbReference type="Pfam" id="PF20979">
    <property type="entry name" value="Arginosuc_syn_C"/>
    <property type="match status" value="1"/>
</dbReference>
<dbReference type="Pfam" id="PF00764">
    <property type="entry name" value="Arginosuc_synth"/>
    <property type="match status" value="1"/>
</dbReference>
<dbReference type="SUPFAM" id="SSF52402">
    <property type="entry name" value="Adenine nucleotide alpha hydrolases-like"/>
    <property type="match status" value="1"/>
</dbReference>
<dbReference type="SUPFAM" id="SSF69864">
    <property type="entry name" value="Argininosuccinate synthetase, C-terminal domain"/>
    <property type="match status" value="1"/>
</dbReference>
<dbReference type="PROSITE" id="PS00564">
    <property type="entry name" value="ARGININOSUCCIN_SYN_1"/>
    <property type="match status" value="1"/>
</dbReference>
<dbReference type="PROSITE" id="PS00565">
    <property type="entry name" value="ARGININOSUCCIN_SYN_2"/>
    <property type="match status" value="1"/>
</dbReference>
<accession>Q21DC6</accession>
<evidence type="ECO:0000255" key="1">
    <source>
        <dbReference type="HAMAP-Rule" id="MF_00581"/>
    </source>
</evidence>
<protein>
    <recommendedName>
        <fullName evidence="1">Argininosuccinate synthase</fullName>
        <ecNumber evidence="1">6.3.4.5</ecNumber>
    </recommendedName>
    <alternativeName>
        <fullName evidence="1">Citrulline--aspartate ligase</fullName>
    </alternativeName>
</protein>
<proteinExistence type="inferred from homology"/>
<feature type="chain" id="PRO_1000025438" description="Argininosuccinate synthase">
    <location>
        <begin position="1"/>
        <end position="445"/>
    </location>
</feature>
<feature type="binding site" evidence="1">
    <location>
        <begin position="17"/>
        <end position="25"/>
    </location>
    <ligand>
        <name>ATP</name>
        <dbReference type="ChEBI" id="CHEBI:30616"/>
    </ligand>
</feature>
<feature type="binding site" evidence="1">
    <location>
        <position position="43"/>
    </location>
    <ligand>
        <name>ATP</name>
        <dbReference type="ChEBI" id="CHEBI:30616"/>
    </ligand>
</feature>
<feature type="binding site" evidence="1">
    <location>
        <position position="99"/>
    </location>
    <ligand>
        <name>L-citrulline</name>
        <dbReference type="ChEBI" id="CHEBI:57743"/>
    </ligand>
</feature>
<feature type="binding site" evidence="1">
    <location>
        <position position="129"/>
    </location>
    <ligand>
        <name>ATP</name>
        <dbReference type="ChEBI" id="CHEBI:30616"/>
    </ligand>
</feature>
<feature type="binding site" evidence="1">
    <location>
        <position position="131"/>
    </location>
    <ligand>
        <name>ATP</name>
        <dbReference type="ChEBI" id="CHEBI:30616"/>
    </ligand>
</feature>
<feature type="binding site" evidence="1">
    <location>
        <position position="131"/>
    </location>
    <ligand>
        <name>L-aspartate</name>
        <dbReference type="ChEBI" id="CHEBI:29991"/>
    </ligand>
</feature>
<feature type="binding site" evidence="1">
    <location>
        <position position="135"/>
    </location>
    <ligand>
        <name>L-aspartate</name>
        <dbReference type="ChEBI" id="CHEBI:29991"/>
    </ligand>
</feature>
<feature type="binding site" evidence="1">
    <location>
        <position position="135"/>
    </location>
    <ligand>
        <name>L-citrulline</name>
        <dbReference type="ChEBI" id="CHEBI:57743"/>
    </ligand>
</feature>
<feature type="binding site" evidence="1">
    <location>
        <position position="136"/>
    </location>
    <ligand>
        <name>ATP</name>
        <dbReference type="ChEBI" id="CHEBI:30616"/>
    </ligand>
</feature>
<feature type="binding site" evidence="1">
    <location>
        <position position="136"/>
    </location>
    <ligand>
        <name>L-aspartate</name>
        <dbReference type="ChEBI" id="CHEBI:29991"/>
    </ligand>
</feature>
<feature type="binding site" evidence="1">
    <location>
        <position position="139"/>
    </location>
    <ligand>
        <name>L-citrulline</name>
        <dbReference type="ChEBI" id="CHEBI:57743"/>
    </ligand>
</feature>
<feature type="binding site" evidence="1">
    <location>
        <position position="192"/>
    </location>
    <ligand>
        <name>L-citrulline</name>
        <dbReference type="ChEBI" id="CHEBI:57743"/>
    </ligand>
</feature>
<feature type="binding site" evidence="1">
    <location>
        <position position="194"/>
    </location>
    <ligand>
        <name>ATP</name>
        <dbReference type="ChEBI" id="CHEBI:30616"/>
    </ligand>
</feature>
<feature type="binding site" evidence="1">
    <location>
        <position position="201"/>
    </location>
    <ligand>
        <name>L-citrulline</name>
        <dbReference type="ChEBI" id="CHEBI:57743"/>
    </ligand>
</feature>
<feature type="binding site" evidence="1">
    <location>
        <position position="203"/>
    </location>
    <ligand>
        <name>L-citrulline</name>
        <dbReference type="ChEBI" id="CHEBI:57743"/>
    </ligand>
</feature>
<feature type="binding site" evidence="1">
    <location>
        <position position="280"/>
    </location>
    <ligand>
        <name>L-citrulline</name>
        <dbReference type="ChEBI" id="CHEBI:57743"/>
    </ligand>
</feature>
<keyword id="KW-0028">Amino-acid biosynthesis</keyword>
<keyword id="KW-0055">Arginine biosynthesis</keyword>
<keyword id="KW-0067">ATP-binding</keyword>
<keyword id="KW-0963">Cytoplasm</keyword>
<keyword id="KW-0436">Ligase</keyword>
<keyword id="KW-0547">Nucleotide-binding</keyword>
<organism>
    <name type="scientific">Rhodopseudomonas palustris (strain BisB18)</name>
    <dbReference type="NCBI Taxonomy" id="316056"/>
    <lineage>
        <taxon>Bacteria</taxon>
        <taxon>Pseudomonadati</taxon>
        <taxon>Pseudomonadota</taxon>
        <taxon>Alphaproteobacteria</taxon>
        <taxon>Hyphomicrobiales</taxon>
        <taxon>Nitrobacteraceae</taxon>
        <taxon>Rhodopseudomonas</taxon>
    </lineage>
</organism>
<gene>
    <name evidence="1" type="primary">argG</name>
    <name type="ordered locus">RPC_0031</name>
</gene>
<name>ASSY_RHOPB</name>
<reference key="1">
    <citation type="submission" date="2006-03" db="EMBL/GenBank/DDBJ databases">
        <title>Complete sequence of Rhodopseudomonas palustris BisB18.</title>
        <authorList>
            <consortium name="US DOE Joint Genome Institute"/>
            <person name="Copeland A."/>
            <person name="Lucas S."/>
            <person name="Lapidus A."/>
            <person name="Barry K."/>
            <person name="Detter J.C."/>
            <person name="Glavina del Rio T."/>
            <person name="Hammon N."/>
            <person name="Israni S."/>
            <person name="Dalin E."/>
            <person name="Tice H."/>
            <person name="Pitluck S."/>
            <person name="Chain P."/>
            <person name="Malfatti S."/>
            <person name="Shin M."/>
            <person name="Vergez L."/>
            <person name="Schmutz J."/>
            <person name="Larimer F."/>
            <person name="Land M."/>
            <person name="Hauser L."/>
            <person name="Pelletier D.A."/>
            <person name="Kyrpides N."/>
            <person name="Anderson I."/>
            <person name="Oda Y."/>
            <person name="Harwood C.S."/>
            <person name="Richardson P."/>
        </authorList>
    </citation>
    <scope>NUCLEOTIDE SEQUENCE [LARGE SCALE GENOMIC DNA]</scope>
    <source>
        <strain>BisB18</strain>
    </source>
</reference>